<geneLocation type="chloroplast"/>
<reference key="1">
    <citation type="journal article" date="2006" name="Plant Cell Rep.">
        <title>The complete chloroplast genome sequences of Solanum tuberosum and comparative analysis with Solanaceae species identified the presence of a 241-bp deletion in cultivated potato chloroplast DNA sequence.</title>
        <authorList>
            <person name="Chung H.-J."/>
            <person name="Jung J.D."/>
            <person name="Park H.-W."/>
            <person name="Kim J.-H."/>
            <person name="Cha H.W."/>
            <person name="Min S.R."/>
            <person name="Jeong W.-J."/>
            <person name="Liu J.R."/>
        </authorList>
    </citation>
    <scope>NUCLEOTIDE SEQUENCE [LARGE SCALE GENOMIC DNA]</scope>
    <source>
        <strain>cv. Desiree</strain>
    </source>
</reference>
<reference key="2">
    <citation type="submission" date="2006-02" db="EMBL/GenBank/DDBJ databases">
        <title>Complete chloroplast genome sequences of Solanum tuberosum cultivar Desiree and comparative analyses with other Solanaceae genomes.</title>
        <authorList>
            <person name="Gargano D."/>
            <person name="Scotti N."/>
            <person name="Vezzi A."/>
            <person name="Bilardi A."/>
            <person name="Valle G."/>
            <person name="Grillo S."/>
            <person name="Cardi T."/>
        </authorList>
    </citation>
    <scope>NUCLEOTIDE SEQUENCE [LARGE SCALE GENOMIC DNA]</scope>
    <source>
        <strain>cv. Desiree</strain>
    </source>
</reference>
<protein>
    <recommendedName>
        <fullName evidence="1">Large ribosomal subunit protein uL16c</fullName>
    </recommendedName>
    <alternativeName>
        <fullName evidence="3">50S ribosomal protein L16, chloroplastic</fullName>
    </alternativeName>
</protein>
<proteinExistence type="inferred from homology"/>
<gene>
    <name evidence="1" type="primary">rpl16</name>
</gene>
<evidence type="ECO:0000255" key="1">
    <source>
        <dbReference type="HAMAP-Rule" id="MF_01342"/>
    </source>
</evidence>
<evidence type="ECO:0000256" key="2">
    <source>
        <dbReference type="SAM" id="MobiDB-lite"/>
    </source>
</evidence>
<evidence type="ECO:0000305" key="3"/>
<accession>Q2VEE3</accession>
<accession>Q27S12</accession>
<organism>
    <name type="scientific">Solanum tuberosum</name>
    <name type="common">Potato</name>
    <dbReference type="NCBI Taxonomy" id="4113"/>
    <lineage>
        <taxon>Eukaryota</taxon>
        <taxon>Viridiplantae</taxon>
        <taxon>Streptophyta</taxon>
        <taxon>Embryophyta</taxon>
        <taxon>Tracheophyta</taxon>
        <taxon>Spermatophyta</taxon>
        <taxon>Magnoliopsida</taxon>
        <taxon>eudicotyledons</taxon>
        <taxon>Gunneridae</taxon>
        <taxon>Pentapetalae</taxon>
        <taxon>asterids</taxon>
        <taxon>lamiids</taxon>
        <taxon>Solanales</taxon>
        <taxon>Solanaceae</taxon>
        <taxon>Solanoideae</taxon>
        <taxon>Solaneae</taxon>
        <taxon>Solanum</taxon>
    </lineage>
</organism>
<comment type="subunit">
    <text evidence="1">Part of the 50S ribosomal subunit.</text>
</comment>
<comment type="subcellular location">
    <subcellularLocation>
        <location>Plastid</location>
        <location>Chloroplast</location>
    </subcellularLocation>
</comment>
<comment type="similarity">
    <text evidence="1">Belongs to the universal ribosomal protein uL16 family.</text>
</comment>
<dbReference type="EMBL" id="DQ231562">
    <property type="protein sequence ID" value="ABB90103.1"/>
    <property type="molecule type" value="Genomic_DNA"/>
</dbReference>
<dbReference type="EMBL" id="DQ386163">
    <property type="protein sequence ID" value="ABD47093.1"/>
    <property type="molecule type" value="Genomic_DNA"/>
</dbReference>
<dbReference type="RefSeq" id="YP_635676.1">
    <property type="nucleotide sequence ID" value="NC_008096.2"/>
</dbReference>
<dbReference type="SMR" id="Q2VEE3"/>
<dbReference type="FunCoup" id="Q2VEE3">
    <property type="interactions" value="948"/>
</dbReference>
<dbReference type="STRING" id="4113.Q2VEE3"/>
<dbReference type="GeneID" id="4099881"/>
<dbReference type="KEGG" id="sot:4099881"/>
<dbReference type="InParanoid" id="Q2VEE3"/>
<dbReference type="OrthoDB" id="1850746at2759"/>
<dbReference type="Proteomes" id="UP000011115">
    <property type="component" value="Unassembled WGS sequence"/>
</dbReference>
<dbReference type="GO" id="GO:0009507">
    <property type="term" value="C:chloroplast"/>
    <property type="evidence" value="ECO:0007669"/>
    <property type="project" value="UniProtKB-SubCell"/>
</dbReference>
<dbReference type="GO" id="GO:0005762">
    <property type="term" value="C:mitochondrial large ribosomal subunit"/>
    <property type="evidence" value="ECO:0000318"/>
    <property type="project" value="GO_Central"/>
</dbReference>
<dbReference type="GO" id="GO:0019843">
    <property type="term" value="F:rRNA binding"/>
    <property type="evidence" value="ECO:0000318"/>
    <property type="project" value="GO_Central"/>
</dbReference>
<dbReference type="GO" id="GO:0003735">
    <property type="term" value="F:structural constituent of ribosome"/>
    <property type="evidence" value="ECO:0000318"/>
    <property type="project" value="GO_Central"/>
</dbReference>
<dbReference type="GO" id="GO:0032543">
    <property type="term" value="P:mitochondrial translation"/>
    <property type="evidence" value="ECO:0000318"/>
    <property type="project" value="GO_Central"/>
</dbReference>
<dbReference type="CDD" id="cd01433">
    <property type="entry name" value="Ribosomal_L16_L10e"/>
    <property type="match status" value="1"/>
</dbReference>
<dbReference type="FunFam" id="3.90.1170.10:FF:000001">
    <property type="entry name" value="50S ribosomal protein L16"/>
    <property type="match status" value="1"/>
</dbReference>
<dbReference type="Gene3D" id="3.90.1170.10">
    <property type="entry name" value="Ribosomal protein L10e/L16"/>
    <property type="match status" value="1"/>
</dbReference>
<dbReference type="HAMAP" id="MF_01342">
    <property type="entry name" value="Ribosomal_uL16"/>
    <property type="match status" value="1"/>
</dbReference>
<dbReference type="InterPro" id="IPR047873">
    <property type="entry name" value="Ribosomal_uL16"/>
</dbReference>
<dbReference type="InterPro" id="IPR000114">
    <property type="entry name" value="Ribosomal_uL16_bact-type"/>
</dbReference>
<dbReference type="InterPro" id="IPR020798">
    <property type="entry name" value="Ribosomal_uL16_CS"/>
</dbReference>
<dbReference type="InterPro" id="IPR016180">
    <property type="entry name" value="Ribosomal_uL16_dom"/>
</dbReference>
<dbReference type="InterPro" id="IPR036920">
    <property type="entry name" value="Ribosomal_uL16_sf"/>
</dbReference>
<dbReference type="NCBIfam" id="TIGR01164">
    <property type="entry name" value="rplP_bact"/>
    <property type="match status" value="1"/>
</dbReference>
<dbReference type="PANTHER" id="PTHR12220">
    <property type="entry name" value="50S/60S RIBOSOMAL PROTEIN L16"/>
    <property type="match status" value="1"/>
</dbReference>
<dbReference type="PANTHER" id="PTHR12220:SF13">
    <property type="entry name" value="LARGE RIBOSOMAL SUBUNIT PROTEIN UL16M"/>
    <property type="match status" value="1"/>
</dbReference>
<dbReference type="Pfam" id="PF00252">
    <property type="entry name" value="Ribosomal_L16"/>
    <property type="match status" value="1"/>
</dbReference>
<dbReference type="PRINTS" id="PR00060">
    <property type="entry name" value="RIBOSOMALL16"/>
</dbReference>
<dbReference type="SUPFAM" id="SSF54686">
    <property type="entry name" value="Ribosomal protein L16p/L10e"/>
    <property type="match status" value="1"/>
</dbReference>
<dbReference type="PROSITE" id="PS00586">
    <property type="entry name" value="RIBOSOMAL_L16_1"/>
    <property type="match status" value="1"/>
</dbReference>
<dbReference type="PROSITE" id="PS00701">
    <property type="entry name" value="RIBOSOMAL_L16_2"/>
    <property type="match status" value="1"/>
</dbReference>
<name>RK16_SOLTU</name>
<sequence length="134" mass="15179">MLSPKRTRFRKQHRGRMKGISSRGNHISFGKYALQALEPAWITSRQIEAGRRAMTRNARRGGKIWVRIFPDKPVTLRPAETRMGSGKGSPEYWVAVVKPGRILYEMGGVTENIARRAISLAASKMPKRTQFIIS</sequence>
<keyword id="KW-0150">Chloroplast</keyword>
<keyword id="KW-0934">Plastid</keyword>
<keyword id="KW-1185">Reference proteome</keyword>
<keyword id="KW-0687">Ribonucleoprotein</keyword>
<keyword id="KW-0689">Ribosomal protein</keyword>
<feature type="chain" id="PRO_0000062312" description="Large ribosomal subunit protein uL16c">
    <location>
        <begin position="1"/>
        <end position="134"/>
    </location>
</feature>
<feature type="region of interest" description="Disordered" evidence="2">
    <location>
        <begin position="1"/>
        <end position="22"/>
    </location>
</feature>
<feature type="compositionally biased region" description="Basic residues" evidence="2">
    <location>
        <begin position="1"/>
        <end position="17"/>
    </location>
</feature>
<feature type="sequence conflict" description="In Ref. 2; ABD47093." evidence="3" ref="2">
    <original>K</original>
    <variation>I</variation>
    <location>
        <position position="127"/>
    </location>
</feature>